<sequence length="397" mass="41442">MSKLDSLFTAALEQAAQRQVRRRLRHAAATPPGRLALDGRTLVNFSSNDYLGLARHPLLAERASLWATRHGAGAQASRLVCGNLDLHEQVEAKLARLKGTEAALLLASGWQANAAVLPALFKAAAAQGEPQVYTDRLNHASLHHGCQAAGVRQIRFRHNDLAHLEHLLAERAGAPGARFIVTESVFSMDGDRADVPALAALAARHHAFLYLDEAHATGVLGPRGMGLAGLAPGGVDLAMGTFSKGLGSFGAYVAGSRALCDYLVNACSGFIYTTALPPAVLGAIDAALDLVPRLDQARATLQGHGERLRASLAAQGIDCGASSTQIVPAIIGDAGHALALAAELERRGLLAVAIRPPTVPAGTSRLRIALSAAHGEAELDQLIEALAAGWRAVRQAA</sequence>
<evidence type="ECO:0000250" key="1"/>
<evidence type="ECO:0000305" key="2"/>
<accession>Q7VWP1</accession>
<organism>
    <name type="scientific">Bordetella pertussis (strain Tohama I / ATCC BAA-589 / NCTC 13251)</name>
    <dbReference type="NCBI Taxonomy" id="257313"/>
    <lineage>
        <taxon>Bacteria</taxon>
        <taxon>Pseudomonadati</taxon>
        <taxon>Pseudomonadota</taxon>
        <taxon>Betaproteobacteria</taxon>
        <taxon>Burkholderiales</taxon>
        <taxon>Alcaligenaceae</taxon>
        <taxon>Bordetella</taxon>
    </lineage>
</organism>
<feature type="chain" id="PRO_0000380926" description="Putative 8-amino-7-oxononanoate synthase">
    <location>
        <begin position="1"/>
        <end position="397"/>
    </location>
</feature>
<feature type="binding site" evidence="1">
    <location>
        <position position="22"/>
    </location>
    <ligand>
        <name>substrate</name>
    </ligand>
</feature>
<feature type="binding site" evidence="1">
    <location>
        <begin position="109"/>
        <end position="110"/>
    </location>
    <ligand>
        <name>pyridoxal 5'-phosphate</name>
        <dbReference type="ChEBI" id="CHEBI:597326"/>
    </ligand>
</feature>
<feature type="binding site" evidence="1">
    <location>
        <position position="139"/>
    </location>
    <ligand>
        <name>substrate</name>
    </ligand>
</feature>
<feature type="binding site" evidence="1">
    <location>
        <position position="187"/>
    </location>
    <ligand>
        <name>pyridoxal 5'-phosphate</name>
        <dbReference type="ChEBI" id="CHEBI:597326"/>
    </ligand>
</feature>
<feature type="binding site" evidence="1">
    <location>
        <begin position="212"/>
        <end position="215"/>
    </location>
    <ligand>
        <name>pyridoxal 5'-phosphate</name>
        <dbReference type="ChEBI" id="CHEBI:597326"/>
    </ligand>
</feature>
<feature type="binding site" evidence="1">
    <location>
        <begin position="241"/>
        <end position="244"/>
    </location>
    <ligand>
        <name>pyridoxal 5'-phosphate</name>
        <dbReference type="ChEBI" id="CHEBI:597326"/>
    </ligand>
</feature>
<feature type="binding site" evidence="1">
    <location>
        <position position="358"/>
    </location>
    <ligand>
        <name>substrate</name>
    </ligand>
</feature>
<feature type="modified residue" description="N6-(pyridoxal phosphate)lysine" evidence="1">
    <location>
        <position position="244"/>
    </location>
</feature>
<protein>
    <recommendedName>
        <fullName>Putative 8-amino-7-oxononanoate synthase</fullName>
        <shortName>AONS</shortName>
        <ecNumber>2.3.1.47</ecNumber>
    </recommendedName>
    <alternativeName>
        <fullName>7-keto-8-amino-pelargonic acid synthase</fullName>
        <shortName>7-KAP synthase</shortName>
    </alternativeName>
    <alternativeName>
        <fullName>8-amino-7-ketopelargonate synthase</fullName>
    </alternativeName>
</protein>
<comment type="function">
    <text evidence="1">Catalyzes the decarboxylative condensation of pimeloyl-[acyl-carrier protein] and L-alanine to produce 8-amino-7-oxononanoate (AON), [acyl-carrier protein], and carbon dioxide.</text>
</comment>
<comment type="catalytic activity">
    <reaction>
        <text>6-carboxyhexanoyl-[ACP] + L-alanine + H(+) = (8S)-8-amino-7-oxononanoate + holo-[ACP] + CO2</text>
        <dbReference type="Rhea" id="RHEA:42288"/>
        <dbReference type="Rhea" id="RHEA-COMP:9685"/>
        <dbReference type="Rhea" id="RHEA-COMP:9955"/>
        <dbReference type="ChEBI" id="CHEBI:15378"/>
        <dbReference type="ChEBI" id="CHEBI:16526"/>
        <dbReference type="ChEBI" id="CHEBI:57972"/>
        <dbReference type="ChEBI" id="CHEBI:64479"/>
        <dbReference type="ChEBI" id="CHEBI:78846"/>
        <dbReference type="ChEBI" id="CHEBI:149468"/>
        <dbReference type="EC" id="2.3.1.47"/>
    </reaction>
</comment>
<comment type="cofactor">
    <cofactor evidence="1">
        <name>pyridoxal 5'-phosphate</name>
        <dbReference type="ChEBI" id="CHEBI:597326"/>
    </cofactor>
</comment>
<comment type="pathway">
    <text>Cofactor biosynthesis; biotin biosynthesis.</text>
</comment>
<comment type="subunit">
    <text evidence="1">Homodimer.</text>
</comment>
<comment type="similarity">
    <text evidence="2">Belongs to the class-II pyridoxal-phosphate-dependent aminotransferase family. BioF subfamily.</text>
</comment>
<name>BIOF_BORPE</name>
<gene>
    <name type="primary">bioF</name>
    <name type="ordered locus">BP2164</name>
</gene>
<reference key="1">
    <citation type="journal article" date="2003" name="Nat. Genet.">
        <title>Comparative analysis of the genome sequences of Bordetella pertussis, Bordetella parapertussis and Bordetella bronchiseptica.</title>
        <authorList>
            <person name="Parkhill J."/>
            <person name="Sebaihia M."/>
            <person name="Preston A."/>
            <person name="Murphy L.D."/>
            <person name="Thomson N.R."/>
            <person name="Harris D.E."/>
            <person name="Holden M.T.G."/>
            <person name="Churcher C.M."/>
            <person name="Bentley S.D."/>
            <person name="Mungall K.L."/>
            <person name="Cerdeno-Tarraga A.-M."/>
            <person name="Temple L."/>
            <person name="James K.D."/>
            <person name="Harris B."/>
            <person name="Quail M.A."/>
            <person name="Achtman M."/>
            <person name="Atkin R."/>
            <person name="Baker S."/>
            <person name="Basham D."/>
            <person name="Bason N."/>
            <person name="Cherevach I."/>
            <person name="Chillingworth T."/>
            <person name="Collins M."/>
            <person name="Cronin A."/>
            <person name="Davis P."/>
            <person name="Doggett J."/>
            <person name="Feltwell T."/>
            <person name="Goble A."/>
            <person name="Hamlin N."/>
            <person name="Hauser H."/>
            <person name="Holroyd S."/>
            <person name="Jagels K."/>
            <person name="Leather S."/>
            <person name="Moule S."/>
            <person name="Norberczak H."/>
            <person name="O'Neil S."/>
            <person name="Ormond D."/>
            <person name="Price C."/>
            <person name="Rabbinowitsch E."/>
            <person name="Rutter S."/>
            <person name="Sanders M."/>
            <person name="Saunders D."/>
            <person name="Seeger K."/>
            <person name="Sharp S."/>
            <person name="Simmonds M."/>
            <person name="Skelton J."/>
            <person name="Squares R."/>
            <person name="Squares S."/>
            <person name="Stevens K."/>
            <person name="Unwin L."/>
            <person name="Whitehead S."/>
            <person name="Barrell B.G."/>
            <person name="Maskell D.J."/>
        </authorList>
    </citation>
    <scope>NUCLEOTIDE SEQUENCE [LARGE SCALE GENOMIC DNA]</scope>
    <source>
        <strain>Tohama I / ATCC BAA-589 / NCTC 13251</strain>
    </source>
</reference>
<dbReference type="EC" id="2.3.1.47"/>
<dbReference type="EMBL" id="BX640417">
    <property type="protein sequence ID" value="CAE42442.1"/>
    <property type="molecule type" value="Genomic_DNA"/>
</dbReference>
<dbReference type="RefSeq" id="NP_880814.1">
    <property type="nucleotide sequence ID" value="NC_002929.2"/>
</dbReference>
<dbReference type="RefSeq" id="WP_010930772.1">
    <property type="nucleotide sequence ID" value="NZ_CP039022.1"/>
</dbReference>
<dbReference type="SMR" id="Q7VWP1"/>
<dbReference type="STRING" id="257313.BP2164"/>
<dbReference type="PaxDb" id="257313-BP2164"/>
<dbReference type="GeneID" id="69601937"/>
<dbReference type="KEGG" id="bpe:BP2164"/>
<dbReference type="PATRIC" id="fig|257313.5.peg.2333"/>
<dbReference type="eggNOG" id="COG0156">
    <property type="taxonomic scope" value="Bacteria"/>
</dbReference>
<dbReference type="HOGENOM" id="CLU_015846_11_2_4"/>
<dbReference type="UniPathway" id="UPA00078"/>
<dbReference type="Proteomes" id="UP000002676">
    <property type="component" value="Chromosome"/>
</dbReference>
<dbReference type="GO" id="GO:0008710">
    <property type="term" value="F:8-amino-7-oxononanoate synthase activity"/>
    <property type="evidence" value="ECO:0007669"/>
    <property type="project" value="UniProtKB-EC"/>
</dbReference>
<dbReference type="GO" id="GO:0030170">
    <property type="term" value="F:pyridoxal phosphate binding"/>
    <property type="evidence" value="ECO:0007669"/>
    <property type="project" value="InterPro"/>
</dbReference>
<dbReference type="GO" id="GO:0009102">
    <property type="term" value="P:biotin biosynthetic process"/>
    <property type="evidence" value="ECO:0007669"/>
    <property type="project" value="UniProtKB-UniPathway"/>
</dbReference>
<dbReference type="Gene3D" id="3.90.1150.10">
    <property type="entry name" value="Aspartate Aminotransferase, domain 1"/>
    <property type="match status" value="1"/>
</dbReference>
<dbReference type="Gene3D" id="3.40.640.10">
    <property type="entry name" value="Type I PLP-dependent aspartate aminotransferase-like (Major domain)"/>
    <property type="match status" value="1"/>
</dbReference>
<dbReference type="InterPro" id="IPR001917">
    <property type="entry name" value="Aminotrans_II_pyridoxalP_BS"/>
</dbReference>
<dbReference type="InterPro" id="IPR004839">
    <property type="entry name" value="Aminotransferase_I/II_large"/>
</dbReference>
<dbReference type="InterPro" id="IPR050087">
    <property type="entry name" value="AON_synthase_class-II"/>
</dbReference>
<dbReference type="InterPro" id="IPR004723">
    <property type="entry name" value="AONS_Archaea/Proteobacteria"/>
</dbReference>
<dbReference type="InterPro" id="IPR015424">
    <property type="entry name" value="PyrdxlP-dep_Trfase"/>
</dbReference>
<dbReference type="InterPro" id="IPR015421">
    <property type="entry name" value="PyrdxlP-dep_Trfase_major"/>
</dbReference>
<dbReference type="InterPro" id="IPR015422">
    <property type="entry name" value="PyrdxlP-dep_Trfase_small"/>
</dbReference>
<dbReference type="NCBIfam" id="TIGR00858">
    <property type="entry name" value="bioF"/>
    <property type="match status" value="1"/>
</dbReference>
<dbReference type="PANTHER" id="PTHR13693:SF100">
    <property type="entry name" value="8-AMINO-7-OXONONANOATE SYNTHASE"/>
    <property type="match status" value="1"/>
</dbReference>
<dbReference type="PANTHER" id="PTHR13693">
    <property type="entry name" value="CLASS II AMINOTRANSFERASE/8-AMINO-7-OXONONANOATE SYNTHASE"/>
    <property type="match status" value="1"/>
</dbReference>
<dbReference type="Pfam" id="PF00155">
    <property type="entry name" value="Aminotran_1_2"/>
    <property type="match status" value="1"/>
</dbReference>
<dbReference type="SUPFAM" id="SSF53383">
    <property type="entry name" value="PLP-dependent transferases"/>
    <property type="match status" value="1"/>
</dbReference>
<dbReference type="PROSITE" id="PS00599">
    <property type="entry name" value="AA_TRANSFER_CLASS_2"/>
    <property type="match status" value="1"/>
</dbReference>
<proteinExistence type="inferred from homology"/>
<keyword id="KW-0093">Biotin biosynthesis</keyword>
<keyword id="KW-0663">Pyridoxal phosphate</keyword>
<keyword id="KW-1185">Reference proteome</keyword>
<keyword id="KW-0808">Transferase</keyword>